<accession>M2XHZ0</accession>
<sequence>MSSAPDLALTARLVQLLQTGNIFTTILSIFGIALSAVAAWGIATCVYNLYFHPLASYPGPFLWRASSLPWKIALLKGTMHHDLMRFHETYGPELRLKPDELSYANAQAWKDIHAHVPGRPEFLKDPIRLPLAPNGVMSILVSDTKNHARFRSLFGHAFSDKGLRTQQKTINTYADQFMEVLKEVADNGKSVEMVNYYNMAVFDTIGALAFGESFNSMRDRKIHPWVDAIHKNLKSVAISHVMRSMGIEPLTPYILPKELRGARANNYSYAIAKINNRMQKTGEQGDFWDRVIVKSGAEGEMNDGSGMSKGEMLNNAAVMVVGGSETSASALCGATYLLAQSPDKMKKAVGEIRGKFKSSDEITLHSVTNMEYLTAVIDETLRMYPSVPGQPPRVVPKGGATVCGKFVPEETRVGVSHIGTYFASYNFTRSHEFIPERHIDKSLFPDDNYAAYQPWSVGVRNCIGKNLAYAELRLILAKTLWHYDITLDREKTGDFLDQKIWSIWAKRELWMKISLAENAK</sequence>
<keyword id="KW-0325">Glycoprotein</keyword>
<keyword id="KW-0349">Heme</keyword>
<keyword id="KW-0408">Iron</keyword>
<keyword id="KW-0472">Membrane</keyword>
<keyword id="KW-0479">Metal-binding</keyword>
<keyword id="KW-0503">Monooxygenase</keyword>
<keyword id="KW-0521">NADP</keyword>
<keyword id="KW-0560">Oxidoreductase</keyword>
<keyword id="KW-1185">Reference proteome</keyword>
<keyword id="KW-0812">Transmembrane</keyword>
<keyword id="KW-1133">Transmembrane helix</keyword>
<reference key="1">
    <citation type="journal article" date="2012" name="PLoS Genet.">
        <title>The genomes of the fungal plant pathogens Cladosporium fulvum and Dothistroma septosporum reveal adaptation to different hosts and lifestyles but also signatures of common ancestry.</title>
        <authorList>
            <person name="de Wit P.J.G.M."/>
            <person name="van der Burgt A."/>
            <person name="Oekmen B."/>
            <person name="Stergiopoulos I."/>
            <person name="Abd-Elsalam K.A."/>
            <person name="Aerts A.L."/>
            <person name="Bahkali A.H."/>
            <person name="Beenen H.G."/>
            <person name="Chettri P."/>
            <person name="Cox M.P."/>
            <person name="Datema E."/>
            <person name="de Vries R.P."/>
            <person name="Dhillon B."/>
            <person name="Ganley A.R."/>
            <person name="Griffiths S.A."/>
            <person name="Guo Y."/>
            <person name="Hamelin R.C."/>
            <person name="Henrissat B."/>
            <person name="Kabir M.S."/>
            <person name="Jashni M.K."/>
            <person name="Kema G."/>
            <person name="Klaubauf S."/>
            <person name="Lapidus A."/>
            <person name="Levasseur A."/>
            <person name="Lindquist E."/>
            <person name="Mehrabi R."/>
            <person name="Ohm R.A."/>
            <person name="Owen T.J."/>
            <person name="Salamov A."/>
            <person name="Schwelm A."/>
            <person name="Schijlen E."/>
            <person name="Sun H."/>
            <person name="van den Burg H.A."/>
            <person name="van Ham R.C.H.J."/>
            <person name="Zhang S."/>
            <person name="Goodwin S.B."/>
            <person name="Grigoriev I.V."/>
            <person name="Collemare J."/>
            <person name="Bradshaw R.E."/>
        </authorList>
    </citation>
    <scope>NUCLEOTIDE SEQUENCE [LARGE SCALE GENOMIC DNA]</scope>
    <source>
        <strain>NZE10 / CBS 128990</strain>
    </source>
</reference>
<reference key="2">
    <citation type="journal article" date="2012" name="PLoS Pathog.">
        <title>Diverse lifestyles and strategies of plant pathogenesis encoded in the genomes of eighteen Dothideomycetes fungi.</title>
        <authorList>
            <person name="Ohm R.A."/>
            <person name="Feau N."/>
            <person name="Henrissat B."/>
            <person name="Schoch C.L."/>
            <person name="Horwitz B.A."/>
            <person name="Barry K.W."/>
            <person name="Condon B.J."/>
            <person name="Copeland A.C."/>
            <person name="Dhillon B."/>
            <person name="Glaser F."/>
            <person name="Hesse C.N."/>
            <person name="Kosti I."/>
            <person name="LaButti K."/>
            <person name="Lindquist E.A."/>
            <person name="Lucas S."/>
            <person name="Salamov A.A."/>
            <person name="Bradshaw R.E."/>
            <person name="Ciuffetti L."/>
            <person name="Hamelin R.C."/>
            <person name="Kema G.H.J."/>
            <person name="Lawrence C."/>
            <person name="Scott J.A."/>
            <person name="Spatafora J.W."/>
            <person name="Turgeon B.G."/>
            <person name="de Wit P.J.G.M."/>
            <person name="Zhong S."/>
            <person name="Goodwin S.B."/>
            <person name="Grigoriev I.V."/>
        </authorList>
    </citation>
    <scope>NUCLEOTIDE SEQUENCE [LARGE SCALE GENOMIC DNA]</scope>
    <source>
        <strain>NZE10 / CBS 128990</strain>
    </source>
</reference>
<reference key="3">
    <citation type="journal article" date="2002" name="Appl. Environ. Microbiol.">
        <title>Dothistroma pini, a forest pathogen, contains homologs of aflatoxin biosynthetic pathway genes.</title>
        <authorList>
            <person name="Bradshaw R.E."/>
            <person name="Bhatnagar D."/>
            <person name="Ganley R.J."/>
            <person name="Gillman C.J."/>
            <person name="Monahan B.J."/>
            <person name="Seconi J.M."/>
        </authorList>
    </citation>
    <scope>FUNCTION</scope>
</reference>
<reference key="4">
    <citation type="journal article" date="2006" name="Mycopathologia">
        <title>A polyketide synthase gene required for biosynthesis of the aflatoxin-like toxin, dothistromin.</title>
        <authorList>
            <person name="Bradshaw R.E."/>
            <person name="Jin H."/>
            <person name="Morgan B.S."/>
            <person name="Schwelm A."/>
            <person name="Teddy O.R."/>
            <person name="Young C.A."/>
            <person name="Zhang S."/>
        </authorList>
    </citation>
    <scope>FUNCTION</scope>
</reference>
<reference key="5">
    <citation type="journal article" date="2007" name="Fungal Genet. Biol.">
        <title>A fragmented aflatoxin-like gene cluster in the forest pathogen Dothistroma septosporum.</title>
        <authorList>
            <person name="Zhang S."/>
            <person name="Schwelm A."/>
            <person name="Jin H."/>
            <person name="Collins L.J."/>
            <person name="Bradshaw R.E."/>
        </authorList>
    </citation>
    <scope>FUNCTION</scope>
</reference>
<reference key="6">
    <citation type="journal article" date="2010" name="Toxins">
        <title>Genetics of dothistromin biosynthesis of Dothistroma septosporum: an update.</title>
        <authorList>
            <person name="Schwelm A."/>
            <person name="Bradshaw R.E."/>
        </authorList>
    </citation>
    <scope>REVIEW ON FUNCTION</scope>
    <scope>PATHWAY</scope>
</reference>
<reference key="7">
    <citation type="journal article" date="2013" name="Fungal Genet. Biol.">
        <title>Dothistromin genes at multiple separate loci are regulated by AflR.</title>
        <authorList>
            <person name="Chettri P."/>
            <person name="Ehrlich K.C."/>
            <person name="Cary J.W."/>
            <person name="Collemare J."/>
            <person name="Cox M.P."/>
            <person name="Griffiths S.A."/>
            <person name="Olson M.A."/>
            <person name="de Wit P.J."/>
            <person name="Bradshaw R.E."/>
        </authorList>
    </citation>
    <scope>FUNCTION</scope>
    <scope>INDUCTION</scope>
    <scope>PATHWAY</scope>
</reference>
<reference key="8">
    <citation type="journal article" date="2013" name="New Phytol.">
        <title>Fragmentation of an aflatoxin-like gene cluster in a forest pathogen.</title>
        <authorList>
            <person name="Bradshaw R.E."/>
            <person name="Slot J.C."/>
            <person name="Moore G.G."/>
            <person name="Chettri P."/>
            <person name="de Wit P.J."/>
            <person name="Ehrlich K.C."/>
            <person name="Ganley A.R."/>
            <person name="Olson M.A."/>
            <person name="Rokas A."/>
            <person name="Carbone I."/>
            <person name="Cox M.P."/>
        </authorList>
    </citation>
    <scope>FUNCTION</scope>
</reference>
<proteinExistence type="evidence at transcript level"/>
<comment type="function">
    <text evidence="2 5 6 8 11 12 13">Versicolorin B desaturase; part of the fragmented gene cluster that mediates the biosynthesis of dothistromin (DOTH), a polyketide toxin very similar in structure to the aflatoxin precursor, versicolorin B (PubMed:12039746, PubMed:17683963, PubMed:22069571, PubMed:23207690, PubMed:23448391). The first step of the pathway is the conversion of acetate to norsolorinic acid (NOR) and requires the fatty acid synthase subunits hexA and hexB, as well as the polyketide synthase pksA (PubMed:16649078, PubMed:23207690). PksA combines a hexanoyl starter unit and 7 malonyl-CoA extender units to synthesize the precursor NOR (By similarity). The hexanoyl starter unit is provided to the acyl-carrier protein (ACP) domain by the fungal fatty acid synthase hexA/hexB (By similarity). The second step is the conversion of NOR to averantin (AVN) and requires the norsolorinic acid ketoreductase nor1, which catalyzes the dehydration of norsolorinic acid to form (1'S)-averantin (PubMed:23207690). The cytochrome P450 monooxygenase avnA then catalyzes the hydroxylation of AVN to 5'hydroxyaverantin (HAVN) (PubMed:23207690). The next step is performed by adhA that transforms HAVN to averufin (AVF) (PubMed:23207690). Averufin might then be converted to hydroxyversicolorone by cypX and avfA (PubMed:23207690). Hydroxyversicolorone is further converted versiconal hemiacetal acetate (VHA) by moxY (PubMed:23207690). VHA is then the substrate for the versiconal hemiacetal acetate esterase est1 to yield versiconal (VAL) (PubMed:23207690). Versicolorin B synthase vbsA then converts VAL to versicolorin B (VERB) by closing the bisfuran ring (PubMed:16649078, PubMed:23207690). Then, the activity of the versicolorin B desaturase verB leads to versicolorin A (VERA) (PubMed:23207690). DotB, a predicted chloroperoxidase, may perform epoxidation of the A-ring of VERA (PubMed:23207690). Alternatively, a cytochrome P450, such as cypX or avnA could catalyze this step (PubMed:23207690). It is also possible that another, uncharacterized, cytochrome P450 enzyme is responsible for this step (PubMed:23207690). Opening of the epoxide could potentially be achieved by the epoxide hydrolase epoA (PubMed:23207690). However, epoA seems not to be required for DOTH biosynthesis, but other epoxide hydrolases may have the ability to complement this hydrolysis (PubMed:23207690). Alternatively, opening of the epoxide ring could be achieved non-enzymatically (PubMed:23207690). The next step is the deoxygenation of ring A to yield the 5,8-dihydroxyanthraquinone which is most likely catalyzed by the NADPH dehydrogenase encoded by ver1 (PubMed:23207690). The last stages of DOTH biosynthesis are proposed to involve hydroxylation of the bisfuran (PubMed:23207690). OrdB and norB might have oxidative roles here (PubMed:23207690). An alternative possibility is that cytochrome P450 monoogenases such as avnA and cypX might perform these steps in addition to previously proposed steps (PubMed:23207690).</text>
</comment>
<comment type="catalytic activity">
    <reaction evidence="2">
        <text>versicolorin B + NADPH + O2 + H(+) = versicolorin A + NADP(+) + 2 H2O</text>
        <dbReference type="Rhea" id="RHEA:35743"/>
        <dbReference type="ChEBI" id="CHEBI:15377"/>
        <dbReference type="ChEBI" id="CHEBI:15378"/>
        <dbReference type="ChEBI" id="CHEBI:15379"/>
        <dbReference type="ChEBI" id="CHEBI:57783"/>
        <dbReference type="ChEBI" id="CHEBI:58349"/>
        <dbReference type="ChEBI" id="CHEBI:77951"/>
        <dbReference type="ChEBI" id="CHEBI:77976"/>
        <dbReference type="EC" id="1.14.19.n5"/>
    </reaction>
</comment>
<comment type="cofactor">
    <cofactor evidence="1">
        <name>heme</name>
        <dbReference type="ChEBI" id="CHEBI:30413"/>
    </cofactor>
</comment>
<comment type="pathway">
    <text evidence="8 12">Mycotoxin biosynthesis.</text>
</comment>
<comment type="subcellular location">
    <subcellularLocation>
        <location evidence="3">Membrane</location>
        <topology evidence="3">Single-pass membrane protein</topology>
    </subcellularLocation>
</comment>
<comment type="induction">
    <text evidence="7">Expression is positively regulated by the dothistromin-specific transcription factor aflR (PubMed:23207690).</text>
</comment>
<comment type="similarity">
    <text evidence="10">Belongs to the cytochrome P450 family.</text>
</comment>
<feature type="chain" id="PRO_0000443463" description="Versicolorin B desaturase">
    <location>
        <begin position="1"/>
        <end position="520"/>
    </location>
</feature>
<feature type="transmembrane region" description="Helical" evidence="3">
    <location>
        <begin position="22"/>
        <end position="42"/>
    </location>
</feature>
<feature type="binding site" description="axial binding residue" evidence="1">
    <location>
        <position position="462"/>
    </location>
    <ligand>
        <name>heme</name>
        <dbReference type="ChEBI" id="CHEBI:30413"/>
    </ligand>
    <ligandPart>
        <name>Fe</name>
        <dbReference type="ChEBI" id="CHEBI:18248"/>
    </ligandPart>
</feature>
<feature type="glycosylation site" description="N-linked (GlcNAc...) asparagine" evidence="4">
    <location>
        <position position="266"/>
    </location>
</feature>
<feature type="glycosylation site" description="N-linked (GlcNAc...) asparagine" evidence="4">
    <location>
        <position position="426"/>
    </location>
</feature>
<gene>
    <name evidence="9" type="primary">verB</name>
    <name type="ORF">DOTSEDRAFT_75692</name>
</gene>
<evidence type="ECO:0000250" key="1">
    <source>
        <dbReference type="UniProtKB" id="P04798"/>
    </source>
</evidence>
<evidence type="ECO:0000250" key="2">
    <source>
        <dbReference type="UniProtKB" id="Q9UW95"/>
    </source>
</evidence>
<evidence type="ECO:0000255" key="3"/>
<evidence type="ECO:0000255" key="4">
    <source>
        <dbReference type="PROSITE-ProRule" id="PRU00498"/>
    </source>
</evidence>
<evidence type="ECO:0000269" key="5">
    <source>
    </source>
</evidence>
<evidence type="ECO:0000269" key="6">
    <source>
    </source>
</evidence>
<evidence type="ECO:0000269" key="7">
    <source>
    </source>
</evidence>
<evidence type="ECO:0000303" key="8">
    <source>
    </source>
</evidence>
<evidence type="ECO:0000303" key="9">
    <source>
    </source>
</evidence>
<evidence type="ECO:0000305" key="10"/>
<evidence type="ECO:0000305" key="11">
    <source>
    </source>
</evidence>
<evidence type="ECO:0000305" key="12">
    <source>
    </source>
</evidence>
<evidence type="ECO:0000305" key="13">
    <source>
    </source>
</evidence>
<organism>
    <name type="scientific">Dothistroma septosporum (strain NZE10 / CBS 128990)</name>
    <name type="common">Red band needle blight fungus</name>
    <name type="synonym">Mycosphaerella pini</name>
    <dbReference type="NCBI Taxonomy" id="675120"/>
    <lineage>
        <taxon>Eukaryota</taxon>
        <taxon>Fungi</taxon>
        <taxon>Dikarya</taxon>
        <taxon>Ascomycota</taxon>
        <taxon>Pezizomycotina</taxon>
        <taxon>Dothideomycetes</taxon>
        <taxon>Dothideomycetidae</taxon>
        <taxon>Mycosphaerellales</taxon>
        <taxon>Mycosphaerellaceae</taxon>
        <taxon>Dothistroma</taxon>
    </lineage>
</organism>
<name>VERB_DOTSN</name>
<dbReference type="EC" id="1.14.19.n5" evidence="2"/>
<dbReference type="EMBL" id="KB446546">
    <property type="protein sequence ID" value="EME39087.1"/>
    <property type="molecule type" value="Genomic_DNA"/>
</dbReference>
<dbReference type="SMR" id="M2XHZ0"/>
<dbReference type="STRING" id="675120.M2XHZ0"/>
<dbReference type="GlyCosmos" id="M2XHZ0">
    <property type="glycosylation" value="2 sites, No reported glycans"/>
</dbReference>
<dbReference type="EnsemblFungi" id="EME39087">
    <property type="protein sequence ID" value="EME39087"/>
    <property type="gene ID" value="DOTSEDRAFT_75692"/>
</dbReference>
<dbReference type="eggNOG" id="KOG0158">
    <property type="taxonomic scope" value="Eukaryota"/>
</dbReference>
<dbReference type="HOGENOM" id="CLU_001570_14_11_1"/>
<dbReference type="OMA" id="WIPENTS"/>
<dbReference type="OrthoDB" id="1470350at2759"/>
<dbReference type="Proteomes" id="UP000016933">
    <property type="component" value="Unassembled WGS sequence"/>
</dbReference>
<dbReference type="GO" id="GO:0016020">
    <property type="term" value="C:membrane"/>
    <property type="evidence" value="ECO:0007669"/>
    <property type="project" value="UniProtKB-SubCell"/>
</dbReference>
<dbReference type="GO" id="GO:0020037">
    <property type="term" value="F:heme binding"/>
    <property type="evidence" value="ECO:0007669"/>
    <property type="project" value="InterPro"/>
</dbReference>
<dbReference type="GO" id="GO:0005506">
    <property type="term" value="F:iron ion binding"/>
    <property type="evidence" value="ECO:0007669"/>
    <property type="project" value="InterPro"/>
</dbReference>
<dbReference type="GO" id="GO:0004497">
    <property type="term" value="F:monooxygenase activity"/>
    <property type="evidence" value="ECO:0007669"/>
    <property type="project" value="UniProtKB-KW"/>
</dbReference>
<dbReference type="GO" id="GO:0140398">
    <property type="term" value="F:versicolorin B desaturase activity"/>
    <property type="evidence" value="ECO:0007669"/>
    <property type="project" value="RHEA"/>
</dbReference>
<dbReference type="GO" id="GO:0009058">
    <property type="term" value="P:biosynthetic process"/>
    <property type="evidence" value="ECO:0007669"/>
    <property type="project" value="UniProtKB-ARBA"/>
</dbReference>
<dbReference type="CDD" id="cd11058">
    <property type="entry name" value="CYP60B-like"/>
    <property type="match status" value="1"/>
</dbReference>
<dbReference type="FunFam" id="1.10.630.10:FF:000047">
    <property type="entry name" value="Cytochrome P450 monooxygenase"/>
    <property type="match status" value="1"/>
</dbReference>
<dbReference type="Gene3D" id="1.10.630.10">
    <property type="entry name" value="Cytochrome P450"/>
    <property type="match status" value="1"/>
</dbReference>
<dbReference type="InterPro" id="IPR001128">
    <property type="entry name" value="Cyt_P450"/>
</dbReference>
<dbReference type="InterPro" id="IPR017972">
    <property type="entry name" value="Cyt_P450_CS"/>
</dbReference>
<dbReference type="InterPro" id="IPR002401">
    <property type="entry name" value="Cyt_P450_E_grp-I"/>
</dbReference>
<dbReference type="InterPro" id="IPR036396">
    <property type="entry name" value="Cyt_P450_sf"/>
</dbReference>
<dbReference type="InterPro" id="IPR050121">
    <property type="entry name" value="Cytochrome_P450_monoxygenase"/>
</dbReference>
<dbReference type="PANTHER" id="PTHR24305">
    <property type="entry name" value="CYTOCHROME P450"/>
    <property type="match status" value="1"/>
</dbReference>
<dbReference type="PANTHER" id="PTHR24305:SF210">
    <property type="entry name" value="CYTOCHROME P450 MONOOXYGENASE ASQL-RELATED"/>
    <property type="match status" value="1"/>
</dbReference>
<dbReference type="Pfam" id="PF00067">
    <property type="entry name" value="p450"/>
    <property type="match status" value="1"/>
</dbReference>
<dbReference type="PRINTS" id="PR00463">
    <property type="entry name" value="EP450I"/>
</dbReference>
<dbReference type="PRINTS" id="PR00385">
    <property type="entry name" value="P450"/>
</dbReference>
<dbReference type="SUPFAM" id="SSF48264">
    <property type="entry name" value="Cytochrome P450"/>
    <property type="match status" value="1"/>
</dbReference>
<dbReference type="PROSITE" id="PS00086">
    <property type="entry name" value="CYTOCHROME_P450"/>
    <property type="match status" value="1"/>
</dbReference>
<protein>
    <recommendedName>
        <fullName evidence="2">Versicolorin B desaturase</fullName>
        <ecNumber evidence="2">1.14.19.n5</ecNumber>
    </recommendedName>
    <alternativeName>
        <fullName evidence="9">Cytochrome P450 monooxygenase verB</fullName>
    </alternativeName>
    <alternativeName>
        <fullName evidence="9">Dothistromin biosynthesis protein verB</fullName>
    </alternativeName>
</protein>